<evidence type="ECO:0000255" key="1">
    <source>
        <dbReference type="HAMAP-Rule" id="MF_00109"/>
    </source>
</evidence>
<dbReference type="EC" id="2.7.1.71" evidence="1"/>
<dbReference type="EMBL" id="CP000890">
    <property type="protein sequence ID" value="ABX78282.1"/>
    <property type="molecule type" value="Genomic_DNA"/>
</dbReference>
<dbReference type="RefSeq" id="WP_012220848.1">
    <property type="nucleotide sequence ID" value="NC_010117.1"/>
</dbReference>
<dbReference type="SMR" id="A9NB80"/>
<dbReference type="KEGG" id="cbs:COXBURSA331_A2097"/>
<dbReference type="HOGENOM" id="CLU_057607_2_2_6"/>
<dbReference type="UniPathway" id="UPA00053">
    <property type="reaction ID" value="UER00088"/>
</dbReference>
<dbReference type="GO" id="GO:0005829">
    <property type="term" value="C:cytosol"/>
    <property type="evidence" value="ECO:0007669"/>
    <property type="project" value="TreeGrafter"/>
</dbReference>
<dbReference type="GO" id="GO:0005524">
    <property type="term" value="F:ATP binding"/>
    <property type="evidence" value="ECO:0007669"/>
    <property type="project" value="UniProtKB-UniRule"/>
</dbReference>
<dbReference type="GO" id="GO:0000287">
    <property type="term" value="F:magnesium ion binding"/>
    <property type="evidence" value="ECO:0007669"/>
    <property type="project" value="UniProtKB-UniRule"/>
</dbReference>
<dbReference type="GO" id="GO:0004765">
    <property type="term" value="F:shikimate kinase activity"/>
    <property type="evidence" value="ECO:0007669"/>
    <property type="project" value="UniProtKB-UniRule"/>
</dbReference>
<dbReference type="GO" id="GO:0008652">
    <property type="term" value="P:amino acid biosynthetic process"/>
    <property type="evidence" value="ECO:0007669"/>
    <property type="project" value="UniProtKB-KW"/>
</dbReference>
<dbReference type="GO" id="GO:0009073">
    <property type="term" value="P:aromatic amino acid family biosynthetic process"/>
    <property type="evidence" value="ECO:0007669"/>
    <property type="project" value="UniProtKB-KW"/>
</dbReference>
<dbReference type="GO" id="GO:0009423">
    <property type="term" value="P:chorismate biosynthetic process"/>
    <property type="evidence" value="ECO:0007669"/>
    <property type="project" value="UniProtKB-UniRule"/>
</dbReference>
<dbReference type="CDD" id="cd00464">
    <property type="entry name" value="SK"/>
    <property type="match status" value="1"/>
</dbReference>
<dbReference type="FunFam" id="3.40.50.300:FF:003599">
    <property type="entry name" value="Shikimate kinase"/>
    <property type="match status" value="1"/>
</dbReference>
<dbReference type="Gene3D" id="3.40.50.300">
    <property type="entry name" value="P-loop containing nucleotide triphosphate hydrolases"/>
    <property type="match status" value="1"/>
</dbReference>
<dbReference type="HAMAP" id="MF_00109">
    <property type="entry name" value="Shikimate_kinase"/>
    <property type="match status" value="1"/>
</dbReference>
<dbReference type="InterPro" id="IPR027417">
    <property type="entry name" value="P-loop_NTPase"/>
</dbReference>
<dbReference type="InterPro" id="IPR031322">
    <property type="entry name" value="Shikimate/glucono_kinase"/>
</dbReference>
<dbReference type="InterPro" id="IPR000623">
    <property type="entry name" value="Shikimate_kinase/TSH1"/>
</dbReference>
<dbReference type="InterPro" id="IPR023000">
    <property type="entry name" value="Shikimate_kinase_CS"/>
</dbReference>
<dbReference type="PANTHER" id="PTHR21087">
    <property type="entry name" value="SHIKIMATE KINASE"/>
    <property type="match status" value="1"/>
</dbReference>
<dbReference type="PANTHER" id="PTHR21087:SF16">
    <property type="entry name" value="SHIKIMATE KINASE 1, CHLOROPLASTIC"/>
    <property type="match status" value="1"/>
</dbReference>
<dbReference type="Pfam" id="PF01202">
    <property type="entry name" value="SKI"/>
    <property type="match status" value="1"/>
</dbReference>
<dbReference type="PRINTS" id="PR01100">
    <property type="entry name" value="SHIKIMTKNASE"/>
</dbReference>
<dbReference type="SUPFAM" id="SSF52540">
    <property type="entry name" value="P-loop containing nucleoside triphosphate hydrolases"/>
    <property type="match status" value="1"/>
</dbReference>
<dbReference type="PROSITE" id="PS01128">
    <property type="entry name" value="SHIKIMATE_KINASE"/>
    <property type="match status" value="1"/>
</dbReference>
<sequence>MKKDLTNIYLIGLMGAGKTSVGSQLAKLTKRILYDSDKEIEKRTGADIAWIFEMEGEAGFRRREREMIEALCKLDNIILATGGGVVLDEKNRQQISETGVVIYLTASIDTQLKRIGQKGEMRRPLFIKNNSKEKLQQLNEIRKPLYQAMADLVYPTDDLNPRQLATQILVDIKQTYSDL</sequence>
<reference key="1">
    <citation type="submission" date="2007-11" db="EMBL/GenBank/DDBJ databases">
        <title>Genome sequencing of phylogenetically and phenotypically diverse Coxiella burnetii isolates.</title>
        <authorList>
            <person name="Seshadri R."/>
            <person name="Samuel J.E."/>
        </authorList>
    </citation>
    <scope>NUCLEOTIDE SEQUENCE [LARGE SCALE GENOMIC DNA]</scope>
    <source>
        <strain>RSA 331 / Henzerling II</strain>
    </source>
</reference>
<keyword id="KW-0028">Amino-acid biosynthesis</keyword>
<keyword id="KW-0057">Aromatic amino acid biosynthesis</keyword>
<keyword id="KW-0067">ATP-binding</keyword>
<keyword id="KW-0963">Cytoplasm</keyword>
<keyword id="KW-0418">Kinase</keyword>
<keyword id="KW-0460">Magnesium</keyword>
<keyword id="KW-0479">Metal-binding</keyword>
<keyword id="KW-0547">Nucleotide-binding</keyword>
<keyword id="KW-0808">Transferase</keyword>
<gene>
    <name evidence="1" type="primary">aroK</name>
    <name type="ordered locus">COXBURSA331_A2097</name>
</gene>
<accession>A9NB80</accession>
<name>AROK_COXBR</name>
<feature type="chain" id="PRO_1000075948" description="Shikimate kinase">
    <location>
        <begin position="1"/>
        <end position="179"/>
    </location>
</feature>
<feature type="binding site" evidence="1">
    <location>
        <begin position="15"/>
        <end position="20"/>
    </location>
    <ligand>
        <name>ATP</name>
        <dbReference type="ChEBI" id="CHEBI:30616"/>
    </ligand>
</feature>
<feature type="binding site" evidence="1">
    <location>
        <position position="19"/>
    </location>
    <ligand>
        <name>Mg(2+)</name>
        <dbReference type="ChEBI" id="CHEBI:18420"/>
    </ligand>
</feature>
<feature type="binding site" evidence="1">
    <location>
        <position position="37"/>
    </location>
    <ligand>
        <name>substrate</name>
    </ligand>
</feature>
<feature type="binding site" evidence="1">
    <location>
        <position position="61"/>
    </location>
    <ligand>
        <name>substrate</name>
    </ligand>
</feature>
<feature type="binding site" evidence="1">
    <location>
        <position position="83"/>
    </location>
    <ligand>
        <name>substrate</name>
    </ligand>
</feature>
<feature type="binding site" evidence="1">
    <location>
        <position position="122"/>
    </location>
    <ligand>
        <name>ATP</name>
        <dbReference type="ChEBI" id="CHEBI:30616"/>
    </ligand>
</feature>
<feature type="binding site" evidence="1">
    <location>
        <position position="142"/>
    </location>
    <ligand>
        <name>substrate</name>
    </ligand>
</feature>
<organism>
    <name type="scientific">Coxiella burnetii (strain RSA 331 / Henzerling II)</name>
    <dbReference type="NCBI Taxonomy" id="360115"/>
    <lineage>
        <taxon>Bacteria</taxon>
        <taxon>Pseudomonadati</taxon>
        <taxon>Pseudomonadota</taxon>
        <taxon>Gammaproteobacteria</taxon>
        <taxon>Legionellales</taxon>
        <taxon>Coxiellaceae</taxon>
        <taxon>Coxiella</taxon>
    </lineage>
</organism>
<protein>
    <recommendedName>
        <fullName evidence="1">Shikimate kinase</fullName>
        <shortName evidence="1">SK</shortName>
        <ecNumber evidence="1">2.7.1.71</ecNumber>
    </recommendedName>
</protein>
<comment type="function">
    <text evidence="1">Catalyzes the specific phosphorylation of the 3-hydroxyl group of shikimic acid using ATP as a cosubstrate.</text>
</comment>
<comment type="catalytic activity">
    <reaction evidence="1">
        <text>shikimate + ATP = 3-phosphoshikimate + ADP + H(+)</text>
        <dbReference type="Rhea" id="RHEA:13121"/>
        <dbReference type="ChEBI" id="CHEBI:15378"/>
        <dbReference type="ChEBI" id="CHEBI:30616"/>
        <dbReference type="ChEBI" id="CHEBI:36208"/>
        <dbReference type="ChEBI" id="CHEBI:145989"/>
        <dbReference type="ChEBI" id="CHEBI:456216"/>
        <dbReference type="EC" id="2.7.1.71"/>
    </reaction>
</comment>
<comment type="cofactor">
    <cofactor evidence="1">
        <name>Mg(2+)</name>
        <dbReference type="ChEBI" id="CHEBI:18420"/>
    </cofactor>
    <text evidence="1">Binds 1 Mg(2+) ion per subunit.</text>
</comment>
<comment type="pathway">
    <text evidence="1">Metabolic intermediate biosynthesis; chorismate biosynthesis; chorismate from D-erythrose 4-phosphate and phosphoenolpyruvate: step 5/7.</text>
</comment>
<comment type="subunit">
    <text evidence="1">Monomer.</text>
</comment>
<comment type="subcellular location">
    <subcellularLocation>
        <location evidence="1">Cytoplasm</location>
    </subcellularLocation>
</comment>
<comment type="similarity">
    <text evidence="1">Belongs to the shikimate kinase family.</text>
</comment>
<proteinExistence type="inferred from homology"/>